<comment type="function">
    <text evidence="1">Catalyzes the attachment of proline to tRNA(Pro) in a two-step reaction: proline is first activated by ATP to form Pro-AMP and then transferred to the acceptor end of tRNA(Pro).</text>
</comment>
<comment type="catalytic activity">
    <reaction evidence="1">
        <text>tRNA(Pro) + L-proline + ATP = L-prolyl-tRNA(Pro) + AMP + diphosphate</text>
        <dbReference type="Rhea" id="RHEA:14305"/>
        <dbReference type="Rhea" id="RHEA-COMP:9700"/>
        <dbReference type="Rhea" id="RHEA-COMP:9702"/>
        <dbReference type="ChEBI" id="CHEBI:30616"/>
        <dbReference type="ChEBI" id="CHEBI:33019"/>
        <dbReference type="ChEBI" id="CHEBI:60039"/>
        <dbReference type="ChEBI" id="CHEBI:78442"/>
        <dbReference type="ChEBI" id="CHEBI:78532"/>
        <dbReference type="ChEBI" id="CHEBI:456215"/>
        <dbReference type="EC" id="6.1.1.15"/>
    </reaction>
</comment>
<comment type="subunit">
    <text evidence="1">Homodimer.</text>
</comment>
<comment type="subcellular location">
    <subcellularLocation>
        <location evidence="1">Cytoplasm</location>
    </subcellularLocation>
</comment>
<comment type="domain">
    <text evidence="1">Consists of three domains: the N-terminal catalytic domain, the anticodon-binding domain and the C-terminal extension.</text>
</comment>
<comment type="similarity">
    <text evidence="1">Belongs to the class-II aminoacyl-tRNA synthetase family. ProS type 3 subfamily.</text>
</comment>
<evidence type="ECO:0000255" key="1">
    <source>
        <dbReference type="HAMAP-Rule" id="MF_01571"/>
    </source>
</evidence>
<protein>
    <recommendedName>
        <fullName evidence="1">Proline--tRNA ligase</fullName>
        <ecNumber evidence="1">6.1.1.15</ecNumber>
    </recommendedName>
    <alternativeName>
        <fullName evidence="1">Prolyl-tRNA synthetase</fullName>
        <shortName evidence="1">ProRS</shortName>
    </alternativeName>
</protein>
<reference key="1">
    <citation type="journal article" date="2009" name="Nat. Genet.">
        <title>Comparative genomic and phylogeographic analysis of Mycobacterium leprae.</title>
        <authorList>
            <person name="Monot M."/>
            <person name="Honore N."/>
            <person name="Garnier T."/>
            <person name="Zidane N."/>
            <person name="Sherafi D."/>
            <person name="Paniz-Mondolfi A."/>
            <person name="Matsuoka M."/>
            <person name="Taylor G.M."/>
            <person name="Donoghue H.D."/>
            <person name="Bouwman A."/>
            <person name="Mays S."/>
            <person name="Watson C."/>
            <person name="Lockwood D."/>
            <person name="Khamispour A."/>
            <person name="Dowlati Y."/>
            <person name="Jianping S."/>
            <person name="Rea T.H."/>
            <person name="Vera-Cabrera L."/>
            <person name="Stefani M.M."/>
            <person name="Banu S."/>
            <person name="Macdonald M."/>
            <person name="Sapkota B.R."/>
            <person name="Spencer J.S."/>
            <person name="Thomas J."/>
            <person name="Harshman K."/>
            <person name="Singh P."/>
            <person name="Busso P."/>
            <person name="Gattiker A."/>
            <person name="Rougemont J."/>
            <person name="Brennan P.J."/>
            <person name="Cole S.T."/>
        </authorList>
    </citation>
    <scope>NUCLEOTIDE SEQUENCE [LARGE SCALE GENOMIC DNA]</scope>
    <source>
        <strain>Br4923</strain>
    </source>
</reference>
<proteinExistence type="inferred from homology"/>
<feature type="chain" id="PRO_1000215567" description="Proline--tRNA ligase">
    <location>
        <begin position="1"/>
        <end position="480"/>
    </location>
</feature>
<organism>
    <name type="scientific">Mycobacterium leprae (strain Br4923)</name>
    <dbReference type="NCBI Taxonomy" id="561304"/>
    <lineage>
        <taxon>Bacteria</taxon>
        <taxon>Bacillati</taxon>
        <taxon>Actinomycetota</taxon>
        <taxon>Actinomycetes</taxon>
        <taxon>Mycobacteriales</taxon>
        <taxon>Mycobacteriaceae</taxon>
        <taxon>Mycobacterium</taxon>
    </lineage>
</organism>
<accession>B8ZRT2</accession>
<name>SYP_MYCLB</name>
<sequence length="480" mass="53585">MGCNKRGVTRQEDDFSAWYNEVVAKAGLIDRGPAKGTMVIRPYGYRIWELLQDELDSKIKELGHENAYFPMLIPENYFNREAEHVEGFHPELAVVTHAGGKELSEPLVIRPTSETVIGDMMAKWITSHRDLPLRLNQWSNVVRWELRPRMLLRTIEFLWQEGHSAHIEKSDALRETLFALDIYTTLARDMAAIPIVSGEKTAGERFAGALNTYTIEAMMRDGKALQSATTHYLGDNFARAFNIRYTTAEEQQAFVHTTSFGLSTRMIGAIVMVHGDDKGLVLPPQVAPYQVVIVPITTGNKASEVGHAAADLARRLQAAGVRTHVDARPQLTPGWKYNEWELRGVPIRLELGPRDLEAGTTVMVRRIGEKAKQPIAIAAAPTELPGILEEFQRTLLERATQFRDDHTTLVDNWDAFATTVATGWALAIHCGNPECEEDIKAETAATPRCVPRQGAPATGRCIRCDAPSAYDKRVIFARAY</sequence>
<keyword id="KW-0030">Aminoacyl-tRNA synthetase</keyword>
<keyword id="KW-0067">ATP-binding</keyword>
<keyword id="KW-0963">Cytoplasm</keyword>
<keyword id="KW-0436">Ligase</keyword>
<keyword id="KW-0547">Nucleotide-binding</keyword>
<keyword id="KW-0648">Protein biosynthesis</keyword>
<gene>
    <name evidence="1" type="primary">proS</name>
    <name type="ordered locus">MLBr01553</name>
</gene>
<dbReference type="EC" id="6.1.1.15" evidence="1"/>
<dbReference type="EMBL" id="FM211192">
    <property type="protein sequence ID" value="CAR71648.1"/>
    <property type="molecule type" value="Genomic_DNA"/>
</dbReference>
<dbReference type="SMR" id="B8ZRT2"/>
<dbReference type="KEGG" id="mlb:MLBr01553"/>
<dbReference type="HOGENOM" id="CLU_001882_4_2_11"/>
<dbReference type="Proteomes" id="UP000006900">
    <property type="component" value="Chromosome"/>
</dbReference>
<dbReference type="GO" id="GO:0017101">
    <property type="term" value="C:aminoacyl-tRNA synthetase multienzyme complex"/>
    <property type="evidence" value="ECO:0007669"/>
    <property type="project" value="TreeGrafter"/>
</dbReference>
<dbReference type="GO" id="GO:0005737">
    <property type="term" value="C:cytoplasm"/>
    <property type="evidence" value="ECO:0007669"/>
    <property type="project" value="UniProtKB-SubCell"/>
</dbReference>
<dbReference type="GO" id="GO:0005524">
    <property type="term" value="F:ATP binding"/>
    <property type="evidence" value="ECO:0007669"/>
    <property type="project" value="UniProtKB-UniRule"/>
</dbReference>
<dbReference type="GO" id="GO:0004827">
    <property type="term" value="F:proline-tRNA ligase activity"/>
    <property type="evidence" value="ECO:0007669"/>
    <property type="project" value="UniProtKB-UniRule"/>
</dbReference>
<dbReference type="GO" id="GO:0006433">
    <property type="term" value="P:prolyl-tRNA aminoacylation"/>
    <property type="evidence" value="ECO:0007669"/>
    <property type="project" value="UniProtKB-UniRule"/>
</dbReference>
<dbReference type="CDD" id="cd00862">
    <property type="entry name" value="ProRS_anticodon_zinc"/>
    <property type="match status" value="1"/>
</dbReference>
<dbReference type="CDD" id="cd00778">
    <property type="entry name" value="ProRS_core_arch_euk"/>
    <property type="match status" value="1"/>
</dbReference>
<dbReference type="FunFam" id="3.40.50.800:FF:000005">
    <property type="entry name" value="bifunctional glutamate/proline--tRNA ligase"/>
    <property type="match status" value="1"/>
</dbReference>
<dbReference type="FunFam" id="3.30.930.10:FF:000037">
    <property type="entry name" value="Proline--tRNA ligase"/>
    <property type="match status" value="1"/>
</dbReference>
<dbReference type="Gene3D" id="3.40.50.800">
    <property type="entry name" value="Anticodon-binding domain"/>
    <property type="match status" value="1"/>
</dbReference>
<dbReference type="Gene3D" id="3.30.930.10">
    <property type="entry name" value="Bira Bifunctional Protein, Domain 2"/>
    <property type="match status" value="1"/>
</dbReference>
<dbReference type="Gene3D" id="3.30.110.30">
    <property type="entry name" value="C-terminal domain of ProRS"/>
    <property type="match status" value="1"/>
</dbReference>
<dbReference type="HAMAP" id="MF_01571">
    <property type="entry name" value="Pro_tRNA_synth_type3"/>
    <property type="match status" value="1"/>
</dbReference>
<dbReference type="InterPro" id="IPR002314">
    <property type="entry name" value="aa-tRNA-synt_IIb"/>
</dbReference>
<dbReference type="InterPro" id="IPR006195">
    <property type="entry name" value="aa-tRNA-synth_II"/>
</dbReference>
<dbReference type="InterPro" id="IPR045864">
    <property type="entry name" value="aa-tRNA-synth_II/BPL/LPL"/>
</dbReference>
<dbReference type="InterPro" id="IPR004154">
    <property type="entry name" value="Anticodon-bd"/>
</dbReference>
<dbReference type="InterPro" id="IPR036621">
    <property type="entry name" value="Anticodon-bd_dom_sf"/>
</dbReference>
<dbReference type="InterPro" id="IPR002316">
    <property type="entry name" value="Pro-tRNA-ligase_IIa"/>
</dbReference>
<dbReference type="InterPro" id="IPR004499">
    <property type="entry name" value="Pro-tRNA-ligase_IIa_arc-type"/>
</dbReference>
<dbReference type="InterPro" id="IPR016061">
    <property type="entry name" value="Pro-tRNA_ligase_II_C"/>
</dbReference>
<dbReference type="InterPro" id="IPR017449">
    <property type="entry name" value="Pro-tRNA_synth_II"/>
</dbReference>
<dbReference type="InterPro" id="IPR033721">
    <property type="entry name" value="ProRS_core_arch_euk"/>
</dbReference>
<dbReference type="NCBIfam" id="TIGR00408">
    <property type="entry name" value="proS_fam_I"/>
    <property type="match status" value="1"/>
</dbReference>
<dbReference type="PANTHER" id="PTHR43382:SF2">
    <property type="entry name" value="BIFUNCTIONAL GLUTAMATE_PROLINE--TRNA LIGASE"/>
    <property type="match status" value="1"/>
</dbReference>
<dbReference type="PANTHER" id="PTHR43382">
    <property type="entry name" value="PROLYL-TRNA SYNTHETASE"/>
    <property type="match status" value="1"/>
</dbReference>
<dbReference type="Pfam" id="PF03129">
    <property type="entry name" value="HGTP_anticodon"/>
    <property type="match status" value="1"/>
</dbReference>
<dbReference type="Pfam" id="PF09180">
    <property type="entry name" value="ProRS-C_1"/>
    <property type="match status" value="1"/>
</dbReference>
<dbReference type="Pfam" id="PF00587">
    <property type="entry name" value="tRNA-synt_2b"/>
    <property type="match status" value="1"/>
</dbReference>
<dbReference type="PRINTS" id="PR01046">
    <property type="entry name" value="TRNASYNTHPRO"/>
</dbReference>
<dbReference type="SMART" id="SM00946">
    <property type="entry name" value="ProRS-C_1"/>
    <property type="match status" value="1"/>
</dbReference>
<dbReference type="SUPFAM" id="SSF64586">
    <property type="entry name" value="C-terminal domain of ProRS"/>
    <property type="match status" value="1"/>
</dbReference>
<dbReference type="SUPFAM" id="SSF52954">
    <property type="entry name" value="Class II aaRS ABD-related"/>
    <property type="match status" value="1"/>
</dbReference>
<dbReference type="SUPFAM" id="SSF55681">
    <property type="entry name" value="Class II aaRS and biotin synthetases"/>
    <property type="match status" value="1"/>
</dbReference>
<dbReference type="PROSITE" id="PS50862">
    <property type="entry name" value="AA_TRNA_LIGASE_II"/>
    <property type="match status" value="1"/>
</dbReference>